<keyword id="KW-0227">DNA damage</keyword>
<keyword id="KW-0234">DNA repair</keyword>
<keyword id="KW-0378">Hydrolase</keyword>
<keyword id="KW-0460">Magnesium</keyword>
<keyword id="KW-0464">Manganese</keyword>
<keyword id="KW-0479">Metal-binding</keyword>
<keyword id="KW-0540">Nuclease</keyword>
<keyword id="KW-0539">Nucleus</keyword>
<keyword id="KW-1185">Reference proteome</keyword>
<keyword id="KW-0862">Zinc</keyword>
<keyword id="KW-0863">Zinc-finger</keyword>
<name>FAN1_CAEBR</name>
<evidence type="ECO:0000250" key="1">
    <source>
        <dbReference type="UniProtKB" id="Q9I2N0"/>
    </source>
</evidence>
<evidence type="ECO:0000250" key="2">
    <source>
        <dbReference type="UniProtKB" id="Q9Y2M0"/>
    </source>
</evidence>
<evidence type="ECO:0000255" key="3">
    <source>
        <dbReference type="PROSITE-ProRule" id="PRU01256"/>
    </source>
</evidence>
<evidence type="ECO:0000256" key="4">
    <source>
        <dbReference type="SAM" id="MobiDB-lite"/>
    </source>
</evidence>
<evidence type="ECO:0000305" key="5"/>
<feature type="chain" id="PRO_0000398621" description="Fanconi-associated nuclease 1 homolog">
    <location>
        <begin position="1"/>
        <end position="878"/>
    </location>
</feature>
<feature type="domain" description="VRR-NUC">
    <location>
        <begin position="757"/>
        <end position="870"/>
    </location>
</feature>
<feature type="zinc finger region" description="UBZ4-type" evidence="3">
    <location>
        <begin position="32"/>
        <end position="59"/>
    </location>
</feature>
<feature type="region of interest" description="Disordered" evidence="4">
    <location>
        <begin position="88"/>
        <end position="180"/>
    </location>
</feature>
<feature type="compositionally biased region" description="Basic and acidic residues" evidence="4">
    <location>
        <begin position="142"/>
        <end position="161"/>
    </location>
</feature>
<feature type="compositionally biased region" description="Low complexity" evidence="4">
    <location>
        <begin position="168"/>
        <end position="179"/>
    </location>
</feature>
<feature type="binding site" evidence="3">
    <location>
        <position position="35"/>
    </location>
    <ligand>
        <name>Zn(2+)</name>
        <dbReference type="ChEBI" id="CHEBI:29105"/>
    </ligand>
</feature>
<feature type="binding site" evidence="3">
    <location>
        <position position="38"/>
    </location>
    <ligand>
        <name>Zn(2+)</name>
        <dbReference type="ChEBI" id="CHEBI:29105"/>
    </ligand>
</feature>
<feature type="binding site" evidence="3">
    <location>
        <position position="50"/>
    </location>
    <ligand>
        <name>Zn(2+)</name>
        <dbReference type="ChEBI" id="CHEBI:29105"/>
    </ligand>
</feature>
<feature type="binding site" evidence="3">
    <location>
        <position position="54"/>
    </location>
    <ligand>
        <name>Zn(2+)</name>
        <dbReference type="ChEBI" id="CHEBI:29105"/>
    </ligand>
</feature>
<feature type="binding site" evidence="1">
    <location>
        <position position="695"/>
    </location>
    <ligand>
        <name>Mn(2+)</name>
        <dbReference type="ChEBI" id="CHEBI:29035"/>
        <label>2</label>
    </ligand>
</feature>
<feature type="binding site" evidence="1">
    <location>
        <position position="823"/>
    </location>
    <ligand>
        <name>Mn(2+)</name>
        <dbReference type="ChEBI" id="CHEBI:29035"/>
        <label>1</label>
    </ligand>
</feature>
<feature type="binding site" evidence="1">
    <location>
        <position position="823"/>
    </location>
    <ligand>
        <name>Mn(2+)</name>
        <dbReference type="ChEBI" id="CHEBI:29035"/>
        <label>2</label>
    </ligand>
</feature>
<feature type="binding site" evidence="1">
    <location>
        <position position="838"/>
    </location>
    <ligand>
        <name>Mn(2+)</name>
        <dbReference type="ChEBI" id="CHEBI:29035"/>
        <label>1</label>
    </ligand>
</feature>
<feature type="binding site" evidence="1">
    <location>
        <position position="839"/>
    </location>
    <ligand>
        <name>Mn(2+)</name>
        <dbReference type="ChEBI" id="CHEBI:29035"/>
        <label>1</label>
    </ligand>
</feature>
<protein>
    <recommendedName>
        <fullName evidence="5">Fanconi-associated nuclease 1 homolog</fullName>
        <ecNumber evidence="2">3.1.4.1</ecNumber>
    </recommendedName>
</protein>
<comment type="function">
    <text evidence="2">Nuclease required for the repair of DNA interstrand cross-links (ICL). Acts as a 5'-3' exonuclease that anchors at a cut end of DNA and cleaves DNA successively at every third nucleotide, allowing to excise an ICL from one strand through flanking incisions.</text>
</comment>
<comment type="catalytic activity">
    <reaction evidence="2">
        <text>Hydrolytically removes 5'-nucleotides successively from the 3'-hydroxy termini of 3'-hydroxy-terminated oligonucleotides.</text>
        <dbReference type="EC" id="3.1.4.1"/>
    </reaction>
</comment>
<comment type="cofactor">
    <cofactor evidence="1">
        <name>Mn(2+)</name>
        <dbReference type="ChEBI" id="CHEBI:29035"/>
    </cofactor>
    <cofactor evidence="1">
        <name>Mg(2+)</name>
        <dbReference type="ChEBI" id="CHEBI:18420"/>
    </cofactor>
    <text evidence="1">Binds 2 magnesium or manganese ions per subunit.</text>
</comment>
<comment type="subcellular location">
    <subcellularLocation>
        <location evidence="2">Nucleus</location>
    </subcellularLocation>
</comment>
<comment type="similarity">
    <text evidence="5">Belongs to the FAN1 family.</text>
</comment>
<gene>
    <name type="primary">fan-1</name>
    <name type="ORF">CBG05421</name>
</gene>
<organism>
    <name type="scientific">Caenorhabditis briggsae</name>
    <dbReference type="NCBI Taxonomy" id="6238"/>
    <lineage>
        <taxon>Eukaryota</taxon>
        <taxon>Metazoa</taxon>
        <taxon>Ecdysozoa</taxon>
        <taxon>Nematoda</taxon>
        <taxon>Chromadorea</taxon>
        <taxon>Rhabditida</taxon>
        <taxon>Rhabditina</taxon>
        <taxon>Rhabditomorpha</taxon>
        <taxon>Rhabditoidea</taxon>
        <taxon>Rhabditidae</taxon>
        <taxon>Peloderinae</taxon>
        <taxon>Caenorhabditis</taxon>
    </lineage>
</organism>
<accession>A8WZU5</accession>
<dbReference type="EC" id="3.1.4.1" evidence="2"/>
<dbReference type="EMBL" id="HE601369">
    <property type="protein sequence ID" value="CAP25905.2"/>
    <property type="molecule type" value="Genomic_DNA"/>
</dbReference>
<dbReference type="SMR" id="A8WZU5"/>
<dbReference type="FunCoup" id="A8WZU5">
    <property type="interactions" value="2486"/>
</dbReference>
<dbReference type="STRING" id="6238.A8WZU5"/>
<dbReference type="WormBase" id="CBG05421">
    <property type="protein sequence ID" value="CBP07085"/>
    <property type="gene ID" value="WBGene00027875"/>
    <property type="gene designation" value="Cbr-fan-1"/>
</dbReference>
<dbReference type="eggNOG" id="KOG2143">
    <property type="taxonomic scope" value="Eukaryota"/>
</dbReference>
<dbReference type="HOGENOM" id="CLU_311526_0_0_1"/>
<dbReference type="InParanoid" id="A8WZU5"/>
<dbReference type="OMA" id="ECRVESM"/>
<dbReference type="Proteomes" id="UP000008549">
    <property type="component" value="Unassembled WGS sequence"/>
</dbReference>
<dbReference type="GO" id="GO:0005634">
    <property type="term" value="C:nucleus"/>
    <property type="evidence" value="ECO:0000318"/>
    <property type="project" value="GO_Central"/>
</dbReference>
<dbReference type="GO" id="GO:0008409">
    <property type="term" value="F:5'-3' exonuclease activity"/>
    <property type="evidence" value="ECO:0000318"/>
    <property type="project" value="GO_Central"/>
</dbReference>
<dbReference type="GO" id="GO:0017108">
    <property type="term" value="F:5'-flap endonuclease activity"/>
    <property type="evidence" value="ECO:0000318"/>
    <property type="project" value="GO_Central"/>
</dbReference>
<dbReference type="GO" id="GO:0070336">
    <property type="term" value="F:flap-structured DNA binding"/>
    <property type="evidence" value="ECO:0000318"/>
    <property type="project" value="GO_Central"/>
</dbReference>
<dbReference type="GO" id="GO:0004528">
    <property type="term" value="F:phosphodiesterase I activity"/>
    <property type="evidence" value="ECO:0007669"/>
    <property type="project" value="UniProtKB-EC"/>
</dbReference>
<dbReference type="GO" id="GO:0008270">
    <property type="term" value="F:zinc ion binding"/>
    <property type="evidence" value="ECO:0007669"/>
    <property type="project" value="UniProtKB-KW"/>
</dbReference>
<dbReference type="GO" id="GO:0036297">
    <property type="term" value="P:interstrand cross-link repair"/>
    <property type="evidence" value="ECO:0000318"/>
    <property type="project" value="GO_Central"/>
</dbReference>
<dbReference type="CDD" id="cd22326">
    <property type="entry name" value="FAN1-like"/>
    <property type="match status" value="1"/>
</dbReference>
<dbReference type="FunFam" id="3.40.1350.10:FF:000020">
    <property type="entry name" value="Fanconi-associated nuclease"/>
    <property type="match status" value="1"/>
</dbReference>
<dbReference type="Gene3D" id="3.40.1350.10">
    <property type="match status" value="1"/>
</dbReference>
<dbReference type="InterPro" id="IPR033315">
    <property type="entry name" value="Fan1-like"/>
</dbReference>
<dbReference type="InterPro" id="IPR049132">
    <property type="entry name" value="FAN1-like_euk"/>
</dbReference>
<dbReference type="InterPro" id="IPR049126">
    <property type="entry name" value="FAN1-like_TPR"/>
</dbReference>
<dbReference type="InterPro" id="IPR049125">
    <property type="entry name" value="FAN1-like_WH"/>
</dbReference>
<dbReference type="InterPro" id="IPR006642">
    <property type="entry name" value="Rad18_UBZ4"/>
</dbReference>
<dbReference type="InterPro" id="IPR011856">
    <property type="entry name" value="tRNA_endonuc-like_dom_sf"/>
</dbReference>
<dbReference type="InterPro" id="IPR014883">
    <property type="entry name" value="VRR_NUC"/>
</dbReference>
<dbReference type="PANTHER" id="PTHR15749">
    <property type="entry name" value="FANCONI-ASSOCIATED NUCLEASE 1"/>
    <property type="match status" value="1"/>
</dbReference>
<dbReference type="PANTHER" id="PTHR15749:SF4">
    <property type="entry name" value="FANCONI-ASSOCIATED NUCLEASE 1"/>
    <property type="match status" value="1"/>
</dbReference>
<dbReference type="Pfam" id="PF21315">
    <property type="entry name" value="FAN1_HTH"/>
    <property type="match status" value="1"/>
</dbReference>
<dbReference type="Pfam" id="PF21170">
    <property type="entry name" value="FAN1_TPR"/>
    <property type="match status" value="1"/>
</dbReference>
<dbReference type="Pfam" id="PF08774">
    <property type="entry name" value="VRR_NUC"/>
    <property type="match status" value="1"/>
</dbReference>
<dbReference type="SMART" id="SM00990">
    <property type="entry name" value="VRR_NUC"/>
    <property type="match status" value="1"/>
</dbReference>
<dbReference type="PROSITE" id="PS51908">
    <property type="entry name" value="ZF_UBZ4"/>
    <property type="match status" value="1"/>
</dbReference>
<proteinExistence type="inferred from homology"/>
<sequence>MKKVKKEKVIGPVVPVSYNRSILAAFEKQAKGKTCPLCNIKFSLASYRSHMNVCKVADDDDEIKVMASYTREEAILLRAGPEIVLGEENSGQEIPVNPKKKRRTGEEQLESTPNPPVVQAFDFDVPGPSTSSENLDPPSESSEVRSVEKEIKKSPVWENRRRSTRLAQNSQKSQSESQEAIVKKETATVLEVLASINNFETRIANSDRPTPYYVKCTVKILKKIISTMKSDGDFYADNFWLPSDIITFYRFVECLSDGAKCLLVRLFVRKPNWYHLEKLEQKYTEILNIRGAAVELMKWEFISDDSTLKTLNEALRISDITVLKNVAKKFKIDGNKNRQDLVQSLRKFALSQQSIFGGTGSVELAVLKSLKTELGTCIKIKDEMVDLFKCLFTLYCPVTTNSANVIDNPASTNVYQDLLYMMLSVENGSVEFPAPNPCPNIASFYKNRAMLMEYVTAKALESSLVLQMSNGDHDIALDLAIDAKEFLDQMPLEQKKYYESLEIHERKFTSIWVHTRCCGHATSVLEKQKKYGMAVEWQKDLLITNKDVQSCCLDSRGMWWDRMLLNLDSHLKVSVFPSYSQTKKRFFQEKTECAKMIQIALTDSSILEKELLSIQDRALKLKEMPPDFRPPLNIGTPMKRVITARTISKSLGDGRVNRFVFRDEEKEEDVECSVEEAARRWYIENDEFTTGVHDEGATWHTLFGLLFYDIIFCTDAVMASVWHSEVQDCPSDLSNTLYLKRKEKFEERFEWLKDADQETIEDNIRRIWGMKQNETNRECSWKHFQSGIEDCVSIFQCIPRPAMLSIFRRLAENYRNSRSGFPDLTLWNPEKKTVAVIEVKGPGDRLSTKQRLWLSFFADNGIKAEVCHVEAQNSRLLV</sequence>
<reference key="1">
    <citation type="journal article" date="2003" name="PLoS Biol.">
        <title>The genome sequence of Caenorhabditis briggsae: a platform for comparative genomics.</title>
        <authorList>
            <person name="Stein L.D."/>
            <person name="Bao Z."/>
            <person name="Blasiar D."/>
            <person name="Blumenthal T."/>
            <person name="Brent M.R."/>
            <person name="Chen N."/>
            <person name="Chinwalla A."/>
            <person name="Clarke L."/>
            <person name="Clee C."/>
            <person name="Coghlan A."/>
            <person name="Coulson A."/>
            <person name="D'Eustachio P."/>
            <person name="Fitch D.H.A."/>
            <person name="Fulton L.A."/>
            <person name="Fulton R.E."/>
            <person name="Griffiths-Jones S."/>
            <person name="Harris T.W."/>
            <person name="Hillier L.W."/>
            <person name="Kamath R."/>
            <person name="Kuwabara P.E."/>
            <person name="Mardis E.R."/>
            <person name="Marra M.A."/>
            <person name="Miner T.L."/>
            <person name="Minx P."/>
            <person name="Mullikin J.C."/>
            <person name="Plumb R.W."/>
            <person name="Rogers J."/>
            <person name="Schein J.E."/>
            <person name="Sohrmann M."/>
            <person name="Spieth J."/>
            <person name="Stajich J.E."/>
            <person name="Wei C."/>
            <person name="Willey D."/>
            <person name="Wilson R.K."/>
            <person name="Durbin R.M."/>
            <person name="Waterston R.H."/>
        </authorList>
    </citation>
    <scope>NUCLEOTIDE SEQUENCE [LARGE SCALE GENOMIC DNA]</scope>
    <source>
        <strain>AF16</strain>
    </source>
</reference>